<organism>
    <name type="scientific">Danio rerio</name>
    <name type="common">Zebrafish</name>
    <name type="synonym">Brachydanio rerio</name>
    <dbReference type="NCBI Taxonomy" id="7955"/>
    <lineage>
        <taxon>Eukaryota</taxon>
        <taxon>Metazoa</taxon>
        <taxon>Chordata</taxon>
        <taxon>Craniata</taxon>
        <taxon>Vertebrata</taxon>
        <taxon>Euteleostomi</taxon>
        <taxon>Actinopterygii</taxon>
        <taxon>Neopterygii</taxon>
        <taxon>Teleostei</taxon>
        <taxon>Ostariophysi</taxon>
        <taxon>Cypriniformes</taxon>
        <taxon>Danionidae</taxon>
        <taxon>Danioninae</taxon>
        <taxon>Danio</taxon>
    </lineage>
</organism>
<evidence type="ECO:0000250" key="1">
    <source>
        <dbReference type="UniProtKB" id="Q8K136"/>
    </source>
</evidence>
<evidence type="ECO:0000250" key="2">
    <source>
        <dbReference type="UniProtKB" id="Q9BWG6"/>
    </source>
</evidence>
<evidence type="ECO:0000255" key="3"/>
<evidence type="ECO:0000256" key="4">
    <source>
        <dbReference type="SAM" id="MobiDB-lite"/>
    </source>
</evidence>
<evidence type="ECO:0000303" key="5">
    <source>
    </source>
</evidence>
<evidence type="ECO:0000305" key="6"/>
<accession>Q2YDS5</accession>
<accession>Q5BJD3</accession>
<accession>Q6TGU4</accession>
<proteinExistence type="evidence at transcript level"/>
<keyword id="KW-0025">Alternative splicing</keyword>
<keyword id="KW-0479">Metal-binding</keyword>
<keyword id="KW-0507">mRNA processing</keyword>
<keyword id="KW-0508">mRNA splicing</keyword>
<keyword id="KW-0539">Nucleus</keyword>
<keyword id="KW-1185">Reference proteome</keyword>
<keyword id="KW-0747">Spliceosome</keyword>
<keyword id="KW-0862">Zinc</keyword>
<keyword id="KW-0863">Zinc-finger</keyword>
<sequence>MSFKREGDDQSQLNILKKRRVSDLLSNFIPDDEATLMKNGRYSCLVCSHRPVFDTVDMLVVHRKGKRHLEGMKWFYGKKNQLRREIDKRRHQDYVKAEDDRQEPSSSAPLLTQTRKITHHALLRTVPYSSCHKKASERSESSSKEHRNDLANSHLSMRTESNDSRTTVHQGPSEVKGEAKKKKKGASTLSSSVCEPLTEQRRRELDHYLKLKSSGWLQDRSGKWVKDENVEFDSDEEEPTLLPPCSESS</sequence>
<name>SCNM1_DANRE</name>
<reference key="1">
    <citation type="journal article" date="2004" name="Proc. Natl. Acad. Sci. U.S.A.">
        <title>Hematopoietic gene expression profile in zebrafish kidney marrow.</title>
        <authorList>
            <person name="Song H.-D."/>
            <person name="Sun X.-J."/>
            <person name="Deng M."/>
            <person name="Zhang G.-W."/>
            <person name="Zhou Y."/>
            <person name="Wu X.-Y."/>
            <person name="Sheng Y."/>
            <person name="Chen Y."/>
            <person name="Ruan Z."/>
            <person name="Jiang C.-L."/>
            <person name="Fan H.-Y."/>
            <person name="Zon L.I."/>
            <person name="Kanki J.P."/>
            <person name="Liu T.X."/>
            <person name="Look A.T."/>
            <person name="Chen Z."/>
        </authorList>
    </citation>
    <scope>NUCLEOTIDE SEQUENCE [LARGE SCALE MRNA] (ISOFORM 2)</scope>
    <source>
        <tissue>Kidney marrow</tissue>
    </source>
</reference>
<reference key="2">
    <citation type="submission" date="2005-11" db="EMBL/GenBank/DDBJ databases">
        <authorList>
            <consortium name="NIH - Zebrafish Gene Collection (ZGC) project"/>
        </authorList>
    </citation>
    <scope>NUCLEOTIDE SEQUENCE [LARGE SCALE MRNA] (ISOFORM 1)</scope>
    <source>
        <tissue>Olfactory epithelium</tissue>
    </source>
</reference>
<gene>
    <name type="primary">scnm1</name>
    <name type="ORF">zgc:123015</name>
</gene>
<comment type="function">
    <text evidence="2">As a component of the minor spliceosome, involved in the splicing of U12-type introns in pre-mRNAs.</text>
</comment>
<comment type="subunit">
    <text evidence="2">Component of the minor spliceosome, which splices U12-type introns.</text>
</comment>
<comment type="subcellular location">
    <subcellularLocation>
        <location evidence="1">Nucleus</location>
        <location evidence="1">Nucleoplasm</location>
    </subcellularLocation>
    <subcellularLocation>
        <location evidence="1">Nucleus speckle</location>
    </subcellularLocation>
</comment>
<comment type="alternative products">
    <event type="alternative splicing"/>
    <isoform>
        <id>Q2YDS5-1</id>
        <name>1</name>
        <sequence type="displayed"/>
    </isoform>
    <isoform>
        <id>Q2YDS5-2</id>
        <name>2</name>
        <sequence type="described" ref="VSP_021492"/>
    </isoform>
</comment>
<comment type="sequence caution" evidence="6">
    <conflict type="erroneous initiation">
        <sequence resource="EMBL-CDS" id="AAH91527"/>
    </conflict>
    <text>Extended N-terminus.</text>
</comment>
<protein>
    <recommendedName>
        <fullName>Sodium channel modifier 1</fullName>
    </recommendedName>
</protein>
<feature type="chain" id="PRO_0000259637" description="Sodium channel modifier 1">
    <location>
        <begin position="1"/>
        <end position="249"/>
    </location>
</feature>
<feature type="zinc finger region" description="Matrin-type">
    <location>
        <begin position="42"/>
        <end position="74"/>
    </location>
</feature>
<feature type="region of interest" description="Disordered" evidence="4">
    <location>
        <begin position="94"/>
        <end position="116"/>
    </location>
</feature>
<feature type="region of interest" description="Disordered" evidence="4">
    <location>
        <begin position="128"/>
        <end position="199"/>
    </location>
</feature>
<feature type="region of interest" description="Disordered" evidence="4">
    <location>
        <begin position="228"/>
        <end position="249"/>
    </location>
</feature>
<feature type="short sequence motif" description="Bipartite nuclear localization signal" evidence="3">
    <location>
        <begin position="4"/>
        <end position="20"/>
    </location>
</feature>
<feature type="compositionally biased region" description="Basic and acidic residues" evidence="4">
    <location>
        <begin position="94"/>
        <end position="103"/>
    </location>
</feature>
<feature type="compositionally biased region" description="Polar residues" evidence="4">
    <location>
        <begin position="104"/>
        <end position="115"/>
    </location>
</feature>
<feature type="compositionally biased region" description="Basic and acidic residues" evidence="4">
    <location>
        <begin position="134"/>
        <end position="149"/>
    </location>
</feature>
<feature type="compositionally biased region" description="Polar residues" evidence="4">
    <location>
        <begin position="150"/>
        <end position="170"/>
    </location>
</feature>
<feature type="compositionally biased region" description="Acidic residues" evidence="4">
    <location>
        <begin position="230"/>
        <end position="239"/>
    </location>
</feature>
<feature type="splice variant" id="VSP_021492" description="In isoform 2." evidence="5">
    <location>
        <begin position="41"/>
        <end position="42"/>
    </location>
</feature>
<feature type="sequence conflict" description="In Ref. 2; AAH91527." evidence="6" ref="2">
    <original>S</original>
    <variation>F</variation>
    <location>
        <position position="153"/>
    </location>
</feature>
<feature type="sequence conflict" description="In Ref. 2; AAH91527." evidence="6" ref="2">
    <original>T</original>
    <variation>S</variation>
    <location>
        <position position="188"/>
    </location>
</feature>
<feature type="sequence conflict" description="In Ref. 2; AAH91527." evidence="6" ref="2">
    <original>D</original>
    <variation>E</variation>
    <location>
        <position position="219"/>
    </location>
</feature>
<dbReference type="EMBL" id="AY398412">
    <property type="protein sequence ID" value="AAQ97845.1"/>
    <property type="molecule type" value="mRNA"/>
</dbReference>
<dbReference type="EMBL" id="BC091527">
    <property type="protein sequence ID" value="AAH91527.1"/>
    <property type="status" value="ALT_INIT"/>
    <property type="molecule type" value="mRNA"/>
</dbReference>
<dbReference type="EMBL" id="BC110091">
    <property type="protein sequence ID" value="AAI10092.1"/>
    <property type="molecule type" value="mRNA"/>
</dbReference>
<dbReference type="RefSeq" id="NP_001001813.1">
    <molecule id="Q2YDS5-2"/>
    <property type="nucleotide sequence ID" value="NM_001001813.1"/>
</dbReference>
<dbReference type="RefSeq" id="XP_005158218.1">
    <molecule id="Q2YDS5-1"/>
    <property type="nucleotide sequence ID" value="XM_005158161.5"/>
</dbReference>
<dbReference type="SMR" id="Q2YDS5"/>
<dbReference type="FunCoup" id="Q2YDS5">
    <property type="interactions" value="332"/>
</dbReference>
<dbReference type="STRING" id="7955.ENSDARP00000026288"/>
<dbReference type="PaxDb" id="7955-ENSDARP00000026288"/>
<dbReference type="Ensembl" id="ENSDART00000004284">
    <molecule id="Q2YDS5-1"/>
    <property type="protein sequence ID" value="ENSDARP00000026288"/>
    <property type="gene ID" value="ENSDARG00000003027"/>
</dbReference>
<dbReference type="GeneID" id="321696"/>
<dbReference type="KEGG" id="dre:321696"/>
<dbReference type="AGR" id="ZFIN:ZDB-GENE-030131-415"/>
<dbReference type="CTD" id="79005"/>
<dbReference type="ZFIN" id="ZDB-GENE-030131-415">
    <property type="gene designation" value="scnm1"/>
</dbReference>
<dbReference type="eggNOG" id="ENOG502QWNV">
    <property type="taxonomic scope" value="Eukaryota"/>
</dbReference>
<dbReference type="HOGENOM" id="CLU_059812_0_0_1"/>
<dbReference type="InParanoid" id="Q2YDS5"/>
<dbReference type="OMA" id="NGKYACT"/>
<dbReference type="OrthoDB" id="1924550at2759"/>
<dbReference type="PhylomeDB" id="Q2YDS5"/>
<dbReference type="TreeFam" id="TF332168"/>
<dbReference type="PRO" id="PR:Q2YDS5"/>
<dbReference type="Proteomes" id="UP000000437">
    <property type="component" value="Chromosome 16"/>
</dbReference>
<dbReference type="Bgee" id="ENSDARG00000003027">
    <property type="expression patterns" value="Expressed in blastula and 28 other cell types or tissues"/>
</dbReference>
<dbReference type="GO" id="GO:0016607">
    <property type="term" value="C:nuclear speck"/>
    <property type="evidence" value="ECO:0000250"/>
    <property type="project" value="UniProtKB"/>
</dbReference>
<dbReference type="GO" id="GO:0005634">
    <property type="term" value="C:nucleus"/>
    <property type="evidence" value="ECO:0000318"/>
    <property type="project" value="GO_Central"/>
</dbReference>
<dbReference type="GO" id="GO:0005681">
    <property type="term" value="C:spliceosomal complex"/>
    <property type="evidence" value="ECO:0007669"/>
    <property type="project" value="UniProtKB-KW"/>
</dbReference>
<dbReference type="GO" id="GO:0008270">
    <property type="term" value="F:zinc ion binding"/>
    <property type="evidence" value="ECO:0007669"/>
    <property type="project" value="UniProtKB-KW"/>
</dbReference>
<dbReference type="GO" id="GO:0000380">
    <property type="term" value="P:alternative mRNA splicing, via spliceosome"/>
    <property type="evidence" value="ECO:0000250"/>
    <property type="project" value="UniProtKB"/>
</dbReference>
<dbReference type="GO" id="GO:0008380">
    <property type="term" value="P:RNA splicing"/>
    <property type="evidence" value="ECO:0000318"/>
    <property type="project" value="GO_Central"/>
</dbReference>
<dbReference type="InterPro" id="IPR033570">
    <property type="entry name" value="SCNM1"/>
</dbReference>
<dbReference type="InterPro" id="IPR031625">
    <property type="entry name" value="SCNM1_acidic"/>
</dbReference>
<dbReference type="InterPro" id="IPR031622">
    <property type="entry name" value="Znf-SCNM1"/>
</dbReference>
<dbReference type="PANTHER" id="PTHR32297">
    <property type="entry name" value="SODIUM CHANNEL MODIFIER 1"/>
    <property type="match status" value="1"/>
</dbReference>
<dbReference type="PANTHER" id="PTHR32297:SF1">
    <property type="entry name" value="SODIUM CHANNEL MODIFIER 1"/>
    <property type="match status" value="1"/>
</dbReference>
<dbReference type="Pfam" id="PF15805">
    <property type="entry name" value="SCNM1_acidic"/>
    <property type="match status" value="1"/>
</dbReference>
<dbReference type="Pfam" id="PF15803">
    <property type="entry name" value="zf-SCNM1"/>
    <property type="match status" value="1"/>
</dbReference>